<sequence>MTITPVYTTFTPTKTPIKFFMAGLTFLIAHISHADDGRTDNQEPINQEIATLEPIINHAQPELLSHDALTPKIEPILAQTPNPAEDTLIADEALLLDNPDLLNHALNSAVMTNHMAGVHALLPIYQKLPKDHQNGILLGYANALAALDKGNAKKAIDELRRIIAIMPEYNVVRFHLARALFMDKQNEAALDQFNKLHADNLPEEVRQVVGQYRQALKQRDSWTWQVGMNLAKEDNINQTPKNTTQGQWTFDKPIDAITLSYQLGADKKWSLPKGAYVGANAQIYGKHHQNHKKYNDHWGRLGANLGFADAKKDLSIETYGEKRFYGHERYTDTIGIRMSVDYRINPKFQSLNAIDISRLTNHRTPRADSNNTLYSTSLIYYPNATRYYLLGADFYDEKVPQDPSDSYQRRGIRTAWGQEWAGGLSSRAQISINKRHYQGANLTSGGQIRHDKQMQASLSLWHRDIHKWGITPRLTISTNINKSNDIKANYHKNQMFVEFSRIF</sequence>
<reference key="1">
    <citation type="journal article" date="2011" name="BMC Genomics">
        <title>Comparative analysis and supragenome modeling of twelve Moraxella catarrhalis clinical isolates.</title>
        <authorList>
            <person name="Davie J.J."/>
            <person name="Earl J."/>
            <person name="de Vries S.P."/>
            <person name="Ahmed A."/>
            <person name="Hu F.Z."/>
            <person name="Bootsma H.J."/>
            <person name="Stol K."/>
            <person name="Hermans P.W."/>
            <person name="Wadowsky R.M."/>
            <person name="Ehrlich G.D."/>
            <person name="Hays J.P."/>
            <person name="Campagnari A.A."/>
        </authorList>
    </citation>
    <scope>NUCLEOTIDE SEQUENCE [LARGE SCALE GENOMIC DNA]</scope>
    <source>
        <strain>O53E</strain>
    </source>
</reference>
<reference key="2">
    <citation type="journal article" date="2017" name="Front. Cell. Infect. Microbiol.">
        <title>Identification of a Large Family of Slam-Dependent Surface Lipoproteins in Gram-Negative Bacteria.</title>
        <authorList>
            <person name="Hooda Y."/>
            <person name="Lai C.C.L."/>
            <person name="Moraes T.F."/>
        </authorList>
    </citation>
    <scope>FUNCTION</scope>
    <scope>SUBCELLULAR LOCATION</scope>
    <source>
        <strain>O53E</strain>
    </source>
</reference>
<accession>P0DTW8</accession>
<keyword id="KW-0998">Cell outer membrane</keyword>
<keyword id="KW-0472">Membrane</keyword>
<keyword id="KW-0732">Signal</keyword>
<keyword id="KW-0802">TPR repeat</keyword>
<keyword id="KW-0812">Transmembrane</keyword>
<keyword id="KW-1134">Transmembrane beta strand</keyword>
<organism>
    <name type="scientific">Moraxella catarrhalis</name>
    <name type="common">Branhamella catarrhalis</name>
    <dbReference type="NCBI Taxonomy" id="480"/>
    <lineage>
        <taxon>Bacteria</taxon>
        <taxon>Pseudomonadati</taxon>
        <taxon>Pseudomonadota</taxon>
        <taxon>Gammaproteobacteria</taxon>
        <taxon>Moraxellales</taxon>
        <taxon>Moraxellaceae</taxon>
        <taxon>Moraxella</taxon>
    </lineage>
</organism>
<dbReference type="EMBL" id="AERL01000018">
    <property type="protein sequence ID" value="EGE27320.1"/>
    <property type="molecule type" value="Genomic_DNA"/>
</dbReference>
<dbReference type="RefSeq" id="WP_003667641.1">
    <property type="nucleotide sequence ID" value="NZ_RCKS01000001.1"/>
</dbReference>
<dbReference type="SMR" id="P0DTW8"/>
<dbReference type="KEGG" id="mcs:DR90_1244"/>
<dbReference type="GO" id="GO:0009279">
    <property type="term" value="C:cell outer membrane"/>
    <property type="evidence" value="ECO:0007669"/>
    <property type="project" value="UniProtKB-SubCell"/>
</dbReference>
<dbReference type="Gene3D" id="1.25.40.10">
    <property type="entry name" value="Tetratricopeptide repeat domain"/>
    <property type="match status" value="1"/>
</dbReference>
<dbReference type="InterPro" id="IPR007655">
    <property type="entry name" value="Slam_C_b-barrel"/>
</dbReference>
<dbReference type="InterPro" id="IPR011990">
    <property type="entry name" value="TPR-like_helical_dom_sf"/>
</dbReference>
<dbReference type="Pfam" id="PF04575">
    <property type="entry name" value="SlipAM"/>
    <property type="match status" value="1"/>
</dbReference>
<dbReference type="Pfam" id="PF24575">
    <property type="entry name" value="TPR_Slam"/>
    <property type="match status" value="1"/>
</dbReference>
<dbReference type="SUPFAM" id="SSF48452">
    <property type="entry name" value="TPR-like"/>
    <property type="match status" value="1"/>
</dbReference>
<protein>
    <recommendedName>
        <fullName evidence="5">Surface lipoprotein assembly modifier</fullName>
        <shortName evidence="5">Slam</shortName>
    </recommendedName>
</protein>
<gene>
    <name type="ORF">EA1_03410</name>
</gene>
<name>SLAM_MORCA</name>
<proteinExistence type="inferred from homology"/>
<comment type="function">
    <text evidence="4">Required for correct export to the cell surface of some cell outer membrane lipoproteins (tested with TpbP) upon heterologous expression in E.coli and probably also in Moraxella.</text>
</comment>
<comment type="subcellular location">
    <subcellularLocation>
        <location evidence="7">Cell outer membrane</location>
        <topology evidence="2">Multi-pass membrane protein</topology>
    </subcellularLocation>
</comment>
<comment type="domain">
    <text evidence="1">Consists of a soluble N-terminal domain and C-terminal probable beta-barrel in the outer membrane with 14 predicted beta-strands.</text>
</comment>
<comment type="similarity">
    <text evidence="6">Belongs to the Slam family.</text>
</comment>
<feature type="signal peptide" evidence="2">
    <location>
        <begin position="1"/>
        <end position="34"/>
    </location>
</feature>
<feature type="chain" id="PRO_0000450808" description="Surface lipoprotein assembly modifier" evidence="2">
    <location>
        <begin position="35"/>
        <end position="503"/>
    </location>
</feature>
<feature type="transmembrane region" description="Beta stranded" evidence="2">
    <location>
        <begin position="222"/>
        <end position="232"/>
    </location>
</feature>
<feature type="transmembrane region" description="Beta stranded" evidence="2">
    <location>
        <begin position="259"/>
        <end position="270"/>
    </location>
</feature>
<feature type="transmembrane region" description="Beta stranded" evidence="2">
    <location>
        <begin position="275"/>
        <end position="285"/>
    </location>
</feature>
<feature type="transmembrane region" description="Beta stranded" evidence="2">
    <location>
        <begin position="299"/>
        <end position="308"/>
    </location>
</feature>
<feature type="transmembrane region" description="Beta stranded" evidence="2">
    <location>
        <begin position="313"/>
        <end position="322"/>
    </location>
</feature>
<feature type="transmembrane region" description="Beta stranded" evidence="2">
    <location>
        <begin position="334"/>
        <end position="343"/>
    </location>
</feature>
<feature type="transmembrane region" description="Beta stranded" evidence="2">
    <location>
        <begin position="348"/>
        <end position="358"/>
    </location>
</feature>
<feature type="transmembrane region" description="Beta stranded" evidence="2">
    <location>
        <begin position="372"/>
        <end position="382"/>
    </location>
</feature>
<feature type="transmembrane region" description="Beta stranded" evidence="2">
    <location>
        <begin position="387"/>
        <end position="396"/>
    </location>
</feature>
<feature type="transmembrane region" description="Beta stranded" evidence="2">
    <location>
        <begin position="410"/>
        <end position="419"/>
    </location>
</feature>
<feature type="transmembrane region" description="Beta stranded" evidence="2">
    <location>
        <begin position="424"/>
        <end position="434"/>
    </location>
</feature>
<feature type="transmembrane region" description="Beta stranded" evidence="2">
    <location>
        <begin position="454"/>
        <end position="463"/>
    </location>
</feature>
<feature type="transmembrane region" description="Beta stranded" evidence="2">
    <location>
        <begin position="470"/>
        <end position="479"/>
    </location>
</feature>
<feature type="transmembrane region" description="Beta stranded" evidence="2">
    <location>
        <begin position="493"/>
        <end position="503"/>
    </location>
</feature>
<feature type="repeat" description="TPR" evidence="3">
    <location>
        <begin position="136"/>
        <end position="169"/>
    </location>
</feature>
<feature type="region of interest" description="N-terminal domain" evidence="1">
    <location>
        <begin position="38"/>
        <end position="220"/>
    </location>
</feature>
<feature type="region of interest" description="C-terminal probable beta barrel" evidence="1">
    <location>
        <begin position="221"/>
        <end position="503"/>
    </location>
</feature>
<evidence type="ECO:0000250" key="1">
    <source>
        <dbReference type="UniProtKB" id="Q9K165"/>
    </source>
</evidence>
<evidence type="ECO:0000255" key="2"/>
<evidence type="ECO:0000255" key="3">
    <source>
        <dbReference type="PROSITE-ProRule" id="PRU00339"/>
    </source>
</evidence>
<evidence type="ECO:0000269" key="4">
    <source>
    </source>
</evidence>
<evidence type="ECO:0000303" key="5">
    <source>
    </source>
</evidence>
<evidence type="ECO:0000305" key="6"/>
<evidence type="ECO:0000305" key="7">
    <source>
    </source>
</evidence>